<evidence type="ECO:0000255" key="1">
    <source>
        <dbReference type="HAMAP-Rule" id="MF_00295"/>
    </source>
</evidence>
<sequence>MPIRIDKKLPAVEILRTENIFVMDDQRAAHQDIRPLKILILNLMPQKMVTETQLLRHLANTPLQLDIDFLYMESHRSKTTRSEHMETFYKTFPEVKDEYFDGMIITGAPVEHLPFEEVDYWEEFRQMLEWSKTHVYSTLHICWGAQAGLYLRYGVEKYQMDSKLSGIYPQDTLKEGHLLFRGFDDSYVSPHSRHTEISKEEVLNKTNLEILSEGPQVGVSILASRDLREIYSFGHLEYDRDTLAKEYFRDRDAGFDPHIPENYFKDDDVNQVPCLCWSSSAALFFSNWVNHAVYQETPFDWRKIEDDASAYGYL</sequence>
<feature type="chain" id="PRO_1000132713" description="Homoserine O-acetyltransferase">
    <location>
        <begin position="1"/>
        <end position="314"/>
    </location>
</feature>
<feature type="active site" description="Acyl-thioester intermediate" evidence="1">
    <location>
        <position position="142"/>
    </location>
</feature>
<feature type="active site" description="Proton acceptor" evidence="1">
    <location>
        <position position="235"/>
    </location>
</feature>
<feature type="active site" evidence="1">
    <location>
        <position position="237"/>
    </location>
</feature>
<feature type="binding site" evidence="1">
    <location>
        <position position="163"/>
    </location>
    <ligand>
        <name>substrate</name>
    </ligand>
</feature>
<feature type="binding site" evidence="1">
    <location>
        <position position="192"/>
    </location>
    <ligand>
        <name>substrate</name>
    </ligand>
</feature>
<feature type="binding site" evidence="1">
    <location>
        <position position="249"/>
    </location>
    <ligand>
        <name>substrate</name>
    </ligand>
</feature>
<feature type="site" description="Important for acyl-CoA specificity" evidence="1">
    <location>
        <position position="111"/>
    </location>
</feature>
<feature type="site" description="Important for substrate specificity" evidence="1">
    <location>
        <position position="192"/>
    </location>
</feature>
<dbReference type="EC" id="2.3.1.31" evidence="1"/>
<dbReference type="EMBL" id="FM211187">
    <property type="protein sequence ID" value="CAR69371.1"/>
    <property type="molecule type" value="Genomic_DNA"/>
</dbReference>
<dbReference type="SMR" id="B8ZLT8"/>
<dbReference type="KEGG" id="sne:SPN23F15930"/>
<dbReference type="HOGENOM" id="CLU_057851_0_1_9"/>
<dbReference type="UniPathway" id="UPA00051">
    <property type="reaction ID" value="UER00074"/>
</dbReference>
<dbReference type="GO" id="GO:0005737">
    <property type="term" value="C:cytoplasm"/>
    <property type="evidence" value="ECO:0007669"/>
    <property type="project" value="UniProtKB-SubCell"/>
</dbReference>
<dbReference type="GO" id="GO:0004414">
    <property type="term" value="F:homoserine O-acetyltransferase activity"/>
    <property type="evidence" value="ECO:0007669"/>
    <property type="project" value="UniProtKB-EC"/>
</dbReference>
<dbReference type="GO" id="GO:0008899">
    <property type="term" value="F:homoserine O-succinyltransferase activity"/>
    <property type="evidence" value="ECO:0007669"/>
    <property type="project" value="UniProtKB-UniRule"/>
</dbReference>
<dbReference type="GO" id="GO:0019281">
    <property type="term" value="P:L-methionine biosynthetic process from homoserine via O-succinyl-L-homoserine and cystathionine"/>
    <property type="evidence" value="ECO:0007669"/>
    <property type="project" value="InterPro"/>
</dbReference>
<dbReference type="CDD" id="cd03131">
    <property type="entry name" value="GATase1_HTS"/>
    <property type="match status" value="1"/>
</dbReference>
<dbReference type="FunFam" id="3.40.50.880:FF:000004">
    <property type="entry name" value="Homoserine O-succinyltransferase"/>
    <property type="match status" value="1"/>
</dbReference>
<dbReference type="Gene3D" id="3.40.50.880">
    <property type="match status" value="1"/>
</dbReference>
<dbReference type="HAMAP" id="MF_00295">
    <property type="entry name" value="MetA_acyltransf"/>
    <property type="match status" value="1"/>
</dbReference>
<dbReference type="InterPro" id="IPR029062">
    <property type="entry name" value="Class_I_gatase-like"/>
</dbReference>
<dbReference type="InterPro" id="IPR005697">
    <property type="entry name" value="HST_MetA"/>
</dbReference>
<dbReference type="InterPro" id="IPR033752">
    <property type="entry name" value="MetA_family"/>
</dbReference>
<dbReference type="NCBIfam" id="TIGR01001">
    <property type="entry name" value="metA"/>
    <property type="match status" value="1"/>
</dbReference>
<dbReference type="PANTHER" id="PTHR20919">
    <property type="entry name" value="HOMOSERINE O-SUCCINYLTRANSFERASE"/>
    <property type="match status" value="1"/>
</dbReference>
<dbReference type="PANTHER" id="PTHR20919:SF0">
    <property type="entry name" value="HOMOSERINE O-SUCCINYLTRANSFERASE"/>
    <property type="match status" value="1"/>
</dbReference>
<dbReference type="Pfam" id="PF04204">
    <property type="entry name" value="HTS"/>
    <property type="match status" value="1"/>
</dbReference>
<dbReference type="PIRSF" id="PIRSF000450">
    <property type="entry name" value="H_ser_succinyltr"/>
    <property type="match status" value="1"/>
</dbReference>
<dbReference type="SUPFAM" id="SSF52317">
    <property type="entry name" value="Class I glutamine amidotransferase-like"/>
    <property type="match status" value="1"/>
</dbReference>
<organism>
    <name type="scientific">Streptococcus pneumoniae (strain ATCC 700669 / Spain 23F-1)</name>
    <dbReference type="NCBI Taxonomy" id="561276"/>
    <lineage>
        <taxon>Bacteria</taxon>
        <taxon>Bacillati</taxon>
        <taxon>Bacillota</taxon>
        <taxon>Bacilli</taxon>
        <taxon>Lactobacillales</taxon>
        <taxon>Streptococcaceae</taxon>
        <taxon>Streptococcus</taxon>
    </lineage>
</organism>
<protein>
    <recommendedName>
        <fullName evidence="1">Homoserine O-acetyltransferase</fullName>
        <shortName evidence="1">HAT</shortName>
        <ecNumber evidence="1">2.3.1.31</ecNumber>
    </recommendedName>
    <alternativeName>
        <fullName evidence="1">Homoserine transacetylase</fullName>
        <shortName evidence="1">HTA</shortName>
    </alternativeName>
</protein>
<keyword id="KW-0012">Acyltransferase</keyword>
<keyword id="KW-0028">Amino-acid biosynthesis</keyword>
<keyword id="KW-0963">Cytoplasm</keyword>
<keyword id="KW-0486">Methionine biosynthesis</keyword>
<keyword id="KW-0808">Transferase</keyword>
<gene>
    <name evidence="1" type="primary">metAA</name>
    <name type="ordered locus">SPN23F15930</name>
</gene>
<comment type="function">
    <text evidence="1">Transfers an acetyl group from acetyl-CoA to L-homoserine, forming acetyl-L-homoserine.</text>
</comment>
<comment type="catalytic activity">
    <reaction evidence="1">
        <text>L-homoserine + acetyl-CoA = O-acetyl-L-homoserine + CoA</text>
        <dbReference type="Rhea" id="RHEA:13701"/>
        <dbReference type="ChEBI" id="CHEBI:57287"/>
        <dbReference type="ChEBI" id="CHEBI:57288"/>
        <dbReference type="ChEBI" id="CHEBI:57476"/>
        <dbReference type="ChEBI" id="CHEBI:57716"/>
        <dbReference type="EC" id="2.3.1.31"/>
    </reaction>
</comment>
<comment type="pathway">
    <text evidence="1">Amino-acid biosynthesis; L-methionine biosynthesis via de novo pathway; O-acetyl-L-homoserine from L-homoserine: step 1/1.</text>
</comment>
<comment type="subcellular location">
    <subcellularLocation>
        <location evidence="1">Cytoplasm</location>
    </subcellularLocation>
</comment>
<comment type="similarity">
    <text evidence="1">Belongs to the MetA family.</text>
</comment>
<reference key="1">
    <citation type="journal article" date="2009" name="J. Bacteriol.">
        <title>Role of conjugative elements in the evolution of the multidrug-resistant pandemic clone Streptococcus pneumoniae Spain23F ST81.</title>
        <authorList>
            <person name="Croucher N.J."/>
            <person name="Walker D."/>
            <person name="Romero P."/>
            <person name="Lennard N."/>
            <person name="Paterson G.K."/>
            <person name="Bason N.C."/>
            <person name="Mitchell A.M."/>
            <person name="Quail M.A."/>
            <person name="Andrew P.W."/>
            <person name="Parkhill J."/>
            <person name="Bentley S.D."/>
            <person name="Mitchell T.J."/>
        </authorList>
    </citation>
    <scope>NUCLEOTIDE SEQUENCE [LARGE SCALE GENOMIC DNA]</scope>
    <source>
        <strain>ATCC 700669 / Spain 23F-1</strain>
    </source>
</reference>
<accession>B8ZLT8</accession>
<name>METAA_STRPJ</name>
<proteinExistence type="inferred from homology"/>